<reference key="1">
    <citation type="journal article" date="2004" name="Nature">
        <title>DNA sequence and analysis of human chromosome 9.</title>
        <authorList>
            <person name="Humphray S.J."/>
            <person name="Oliver K."/>
            <person name="Hunt A.R."/>
            <person name="Plumb R.W."/>
            <person name="Loveland J.E."/>
            <person name="Howe K.L."/>
            <person name="Andrews T.D."/>
            <person name="Searle S."/>
            <person name="Hunt S.E."/>
            <person name="Scott C.E."/>
            <person name="Jones M.C."/>
            <person name="Ainscough R."/>
            <person name="Almeida J.P."/>
            <person name="Ambrose K.D."/>
            <person name="Ashwell R.I.S."/>
            <person name="Babbage A.K."/>
            <person name="Babbage S."/>
            <person name="Bagguley C.L."/>
            <person name="Bailey J."/>
            <person name="Banerjee R."/>
            <person name="Barker D.J."/>
            <person name="Barlow K.F."/>
            <person name="Bates K."/>
            <person name="Beasley H."/>
            <person name="Beasley O."/>
            <person name="Bird C.P."/>
            <person name="Bray-Allen S."/>
            <person name="Brown A.J."/>
            <person name="Brown J.Y."/>
            <person name="Burford D."/>
            <person name="Burrill W."/>
            <person name="Burton J."/>
            <person name="Carder C."/>
            <person name="Carter N.P."/>
            <person name="Chapman J.C."/>
            <person name="Chen Y."/>
            <person name="Clarke G."/>
            <person name="Clark S.Y."/>
            <person name="Clee C.M."/>
            <person name="Clegg S."/>
            <person name="Collier R.E."/>
            <person name="Corby N."/>
            <person name="Crosier M."/>
            <person name="Cummings A.T."/>
            <person name="Davies J."/>
            <person name="Dhami P."/>
            <person name="Dunn M."/>
            <person name="Dutta I."/>
            <person name="Dyer L.W."/>
            <person name="Earthrowl M.E."/>
            <person name="Faulkner L."/>
            <person name="Fleming C.J."/>
            <person name="Frankish A."/>
            <person name="Frankland J.A."/>
            <person name="French L."/>
            <person name="Fricker D.G."/>
            <person name="Garner P."/>
            <person name="Garnett J."/>
            <person name="Ghori J."/>
            <person name="Gilbert J.G.R."/>
            <person name="Glison C."/>
            <person name="Grafham D.V."/>
            <person name="Gribble S."/>
            <person name="Griffiths C."/>
            <person name="Griffiths-Jones S."/>
            <person name="Grocock R."/>
            <person name="Guy J."/>
            <person name="Hall R.E."/>
            <person name="Hammond S."/>
            <person name="Harley J.L."/>
            <person name="Harrison E.S.I."/>
            <person name="Hart E.A."/>
            <person name="Heath P.D."/>
            <person name="Henderson C.D."/>
            <person name="Hopkins B.L."/>
            <person name="Howard P.J."/>
            <person name="Howden P.J."/>
            <person name="Huckle E."/>
            <person name="Johnson C."/>
            <person name="Johnson D."/>
            <person name="Joy A.A."/>
            <person name="Kay M."/>
            <person name="Keenan S."/>
            <person name="Kershaw J.K."/>
            <person name="Kimberley A.M."/>
            <person name="King A."/>
            <person name="Knights A."/>
            <person name="Laird G.K."/>
            <person name="Langford C."/>
            <person name="Lawlor S."/>
            <person name="Leongamornlert D.A."/>
            <person name="Leversha M."/>
            <person name="Lloyd C."/>
            <person name="Lloyd D.M."/>
            <person name="Lovell J."/>
            <person name="Martin S."/>
            <person name="Mashreghi-Mohammadi M."/>
            <person name="Matthews L."/>
            <person name="McLaren S."/>
            <person name="McLay K.E."/>
            <person name="McMurray A."/>
            <person name="Milne S."/>
            <person name="Nickerson T."/>
            <person name="Nisbett J."/>
            <person name="Nordsiek G."/>
            <person name="Pearce A.V."/>
            <person name="Peck A.I."/>
            <person name="Porter K.M."/>
            <person name="Pandian R."/>
            <person name="Pelan S."/>
            <person name="Phillimore B."/>
            <person name="Povey S."/>
            <person name="Ramsey Y."/>
            <person name="Rand V."/>
            <person name="Scharfe M."/>
            <person name="Sehra H.K."/>
            <person name="Shownkeen R."/>
            <person name="Sims S.K."/>
            <person name="Skuce C.D."/>
            <person name="Smith M."/>
            <person name="Steward C.A."/>
            <person name="Swarbreck D."/>
            <person name="Sycamore N."/>
            <person name="Tester J."/>
            <person name="Thorpe A."/>
            <person name="Tracey A."/>
            <person name="Tromans A."/>
            <person name="Thomas D.W."/>
            <person name="Wall M."/>
            <person name="Wallis J.M."/>
            <person name="West A.P."/>
            <person name="Whitehead S.L."/>
            <person name="Willey D.L."/>
            <person name="Williams S.A."/>
            <person name="Wilming L."/>
            <person name="Wray P.W."/>
            <person name="Young L."/>
            <person name="Ashurst J.L."/>
            <person name="Coulson A."/>
            <person name="Blocker H."/>
            <person name="Durbin R.M."/>
            <person name="Sulston J.E."/>
            <person name="Hubbard T."/>
            <person name="Jackson M.J."/>
            <person name="Bentley D.R."/>
            <person name="Beck S."/>
            <person name="Rogers J."/>
            <person name="Dunham I."/>
        </authorList>
    </citation>
    <scope>NUCLEOTIDE SEQUENCE [LARGE SCALE GENOMIC DNA]</scope>
</reference>
<reference key="2">
    <citation type="journal article" date="2007" name="J. Biol. Chem.">
        <title>REKLES is an ARID3-restricted multifunctional domain.</title>
        <authorList>
            <person name="Kim D."/>
            <person name="Probst L."/>
            <person name="Das C."/>
            <person name="Tucker P.W."/>
        </authorList>
    </citation>
    <scope>IDENTIFICATION</scope>
</reference>
<reference key="3">
    <citation type="journal article" date="2024" name="J. Proteome Res.">
        <title>ARID3C Acts as a Regulator of Monocyte-to-Macrophage Differentiation Interacting with NPM1.</title>
        <authorList>
            <person name="Kim H.S."/>
            <person name="Kim Y.I."/>
            <person name="Cho J.Y."/>
        </authorList>
    </citation>
    <scope>FUNCTION</scope>
    <scope>INTERACTION WITH NPM1</scope>
    <scope>SUBCELLULAR LOCATION</scope>
    <scope>MUTAGENESIS OF 381-VAL--ARG-385</scope>
    <scope>DOMAIN</scope>
</reference>
<comment type="function">
    <text evidence="4">Transcription factor involved in monocyte-to-macrophage differentiation. Forms a complex with NPM1 to translocate to the nucleus, acting as a transcription factor that promotes the expression of the genes involved in macrophage differentiation, such as STAT3, STAT1 and JUNB.</text>
</comment>
<comment type="subunit">
    <text evidence="4">Interacts (via REKLES DOMAIN) with NPM1; the interaction mediates ARID3C nuclear shuttling.</text>
</comment>
<comment type="interaction">
    <interactant intactId="EBI-12805486">
        <id>A6NKF2</id>
    </interactant>
    <interactant intactId="EBI-725606">
        <id>Q9NWQ9</id>
        <label>C14orf119</label>
    </interactant>
    <organismsDiffer>false</organismsDiffer>
    <experiments>3</experiments>
</comment>
<comment type="interaction">
    <interactant intactId="EBI-12805486">
        <id>A6NKF2</id>
    </interactant>
    <interactant intactId="EBI-4392727">
        <id>O00257-3</id>
        <label>CBX4</label>
    </interactant>
    <organismsDiffer>false</organismsDiffer>
    <experiments>3</experiments>
</comment>
<comment type="interaction">
    <interactant intactId="EBI-12805486">
        <id>A6NKF2</id>
    </interactant>
    <interactant intactId="EBI-2340927">
        <id>P78317</id>
        <label>RNF4</label>
    </interactant>
    <organismsDiffer>false</organismsDiffer>
    <experiments>3</experiments>
</comment>
<comment type="subcellular location">
    <subcellularLocation>
        <location evidence="4">Nucleus</location>
    </subcellularLocation>
    <text evidence="4">Interaction with NPM1 mediates ARID3C nuclear shuttling.</text>
</comment>
<comment type="domain">
    <text evidence="4">REKLES domain is required for interaction with NPM1 and nuclear shuttling.</text>
</comment>
<dbReference type="EMBL" id="AL450283">
    <property type="status" value="NOT_ANNOTATED_CDS"/>
    <property type="molecule type" value="Genomic_DNA"/>
</dbReference>
<dbReference type="CCDS" id="CCDS35006.1"/>
<dbReference type="RefSeq" id="NP_001017363.1">
    <property type="nucleotide sequence ID" value="NM_001017363.4"/>
</dbReference>
<dbReference type="SMR" id="A6NKF2"/>
<dbReference type="BioGRID" id="126518">
    <property type="interactions" value="10"/>
</dbReference>
<dbReference type="FunCoup" id="A6NKF2">
    <property type="interactions" value="35"/>
</dbReference>
<dbReference type="IntAct" id="A6NKF2">
    <property type="interactions" value="9"/>
</dbReference>
<dbReference type="STRING" id="9606.ENSP00000368189"/>
<dbReference type="iPTMnet" id="A6NKF2"/>
<dbReference type="PhosphoSitePlus" id="A6NKF2"/>
<dbReference type="BioMuta" id="ARID3C"/>
<dbReference type="jPOST" id="A6NKF2"/>
<dbReference type="MassIVE" id="A6NKF2"/>
<dbReference type="PaxDb" id="9606-ENSP00000368189"/>
<dbReference type="PeptideAtlas" id="A6NKF2"/>
<dbReference type="ProteomicsDB" id="1410"/>
<dbReference type="Antibodypedia" id="25532">
    <property type="antibodies" value="52 antibodies from 17 providers"/>
</dbReference>
<dbReference type="DNASU" id="138715"/>
<dbReference type="Ensembl" id="ENST00000378909.4">
    <property type="protein sequence ID" value="ENSP00000368189.2"/>
    <property type="gene ID" value="ENSG00000205143.5"/>
</dbReference>
<dbReference type="GeneID" id="138715"/>
<dbReference type="KEGG" id="hsa:138715"/>
<dbReference type="MANE-Select" id="ENST00000378909.4">
    <property type="protein sequence ID" value="ENSP00000368189.2"/>
    <property type="RefSeq nucleotide sequence ID" value="NM_001017363.4"/>
    <property type="RefSeq protein sequence ID" value="NP_001017363.1"/>
</dbReference>
<dbReference type="UCSC" id="uc011lon.3">
    <property type="organism name" value="human"/>
</dbReference>
<dbReference type="AGR" id="HGNC:21209"/>
<dbReference type="CTD" id="138715"/>
<dbReference type="DisGeNET" id="138715"/>
<dbReference type="GeneCards" id="ARID3C"/>
<dbReference type="HGNC" id="HGNC:21209">
    <property type="gene designation" value="ARID3C"/>
</dbReference>
<dbReference type="HPA" id="ENSG00000205143">
    <property type="expression patterns" value="Tissue enriched (liver)"/>
</dbReference>
<dbReference type="MIM" id="620868">
    <property type="type" value="gene"/>
</dbReference>
<dbReference type="neXtProt" id="NX_A6NKF2"/>
<dbReference type="OpenTargets" id="ENSG00000205143"/>
<dbReference type="PharmGKB" id="PA134928507"/>
<dbReference type="VEuPathDB" id="HostDB:ENSG00000205143"/>
<dbReference type="eggNOG" id="KOG2744">
    <property type="taxonomic scope" value="Eukaryota"/>
</dbReference>
<dbReference type="GeneTree" id="ENSGT00940000160028"/>
<dbReference type="HOGENOM" id="CLU_026952_1_0_1"/>
<dbReference type="InParanoid" id="A6NKF2"/>
<dbReference type="OMA" id="RHAYTAT"/>
<dbReference type="OrthoDB" id="10044343at2759"/>
<dbReference type="PAN-GO" id="A6NKF2">
    <property type="GO annotations" value="3 GO annotations based on evolutionary models"/>
</dbReference>
<dbReference type="PhylomeDB" id="A6NKF2"/>
<dbReference type="TreeFam" id="TF320364"/>
<dbReference type="PathwayCommons" id="A6NKF2"/>
<dbReference type="SignaLink" id="A6NKF2"/>
<dbReference type="BioGRID-ORCS" id="138715">
    <property type="hits" value="21 hits in 1166 CRISPR screens"/>
</dbReference>
<dbReference type="GenomeRNAi" id="138715"/>
<dbReference type="Pharos" id="A6NKF2">
    <property type="development level" value="Tdark"/>
</dbReference>
<dbReference type="PRO" id="PR:A6NKF2"/>
<dbReference type="Proteomes" id="UP000005640">
    <property type="component" value="Chromosome 9"/>
</dbReference>
<dbReference type="RNAct" id="A6NKF2">
    <property type="molecule type" value="protein"/>
</dbReference>
<dbReference type="Bgee" id="ENSG00000205143">
    <property type="expression patterns" value="Expressed in primordial germ cell in gonad and 45 other cell types or tissues"/>
</dbReference>
<dbReference type="GO" id="GO:0005737">
    <property type="term" value="C:cytoplasm"/>
    <property type="evidence" value="ECO:0007669"/>
    <property type="project" value="Ensembl"/>
</dbReference>
<dbReference type="GO" id="GO:0045121">
    <property type="term" value="C:membrane raft"/>
    <property type="evidence" value="ECO:0000314"/>
    <property type="project" value="MGI"/>
</dbReference>
<dbReference type="GO" id="GO:0005634">
    <property type="term" value="C:nucleus"/>
    <property type="evidence" value="ECO:0000314"/>
    <property type="project" value="UniProt"/>
</dbReference>
<dbReference type="GO" id="GO:0003682">
    <property type="term" value="F:chromatin binding"/>
    <property type="evidence" value="ECO:0007669"/>
    <property type="project" value="Ensembl"/>
</dbReference>
<dbReference type="GO" id="GO:0003677">
    <property type="term" value="F:DNA binding"/>
    <property type="evidence" value="ECO:0000318"/>
    <property type="project" value="GO_Central"/>
</dbReference>
<dbReference type="GO" id="GO:0000981">
    <property type="term" value="F:DNA-binding transcription factor activity, RNA polymerase II-specific"/>
    <property type="evidence" value="ECO:0000314"/>
    <property type="project" value="UniProt"/>
</dbReference>
<dbReference type="GO" id="GO:0030225">
    <property type="term" value="P:macrophage differentiation"/>
    <property type="evidence" value="ECO:0000314"/>
    <property type="project" value="UniProt"/>
</dbReference>
<dbReference type="GO" id="GO:0045944">
    <property type="term" value="P:positive regulation of transcription by RNA polymerase II"/>
    <property type="evidence" value="ECO:0007669"/>
    <property type="project" value="Ensembl"/>
</dbReference>
<dbReference type="GO" id="GO:0006357">
    <property type="term" value="P:regulation of transcription by RNA polymerase II"/>
    <property type="evidence" value="ECO:0000318"/>
    <property type="project" value="GO_Central"/>
</dbReference>
<dbReference type="FunFam" id="1.10.150.60:FF:000007">
    <property type="entry name" value="AT-rich interactive domain-containing protein 3C"/>
    <property type="match status" value="1"/>
</dbReference>
<dbReference type="Gene3D" id="1.10.150.60">
    <property type="entry name" value="ARID DNA-binding domain"/>
    <property type="match status" value="1"/>
</dbReference>
<dbReference type="InterPro" id="IPR045147">
    <property type="entry name" value="ARI3A/B/C"/>
</dbReference>
<dbReference type="InterPro" id="IPR001606">
    <property type="entry name" value="ARID_dom"/>
</dbReference>
<dbReference type="InterPro" id="IPR036431">
    <property type="entry name" value="ARID_dom_sf"/>
</dbReference>
<dbReference type="InterPro" id="IPR023334">
    <property type="entry name" value="REKLES_domain"/>
</dbReference>
<dbReference type="PANTHER" id="PTHR15348:SF2">
    <property type="entry name" value="AT-RICH INTERACTIVE DOMAIN-CONTAINING PROTEIN 3C"/>
    <property type="match status" value="1"/>
</dbReference>
<dbReference type="PANTHER" id="PTHR15348">
    <property type="entry name" value="AT-RICH INTERACTIVE DOMAIN-CONTAINING PROTEIN ARID DOMAIN- CONTAINING PROTEIN DEAD RINGER PROTEIN B-CELL REGULATOR OF IGH TRANSCRIPTION BRIGHT"/>
    <property type="match status" value="1"/>
</dbReference>
<dbReference type="Pfam" id="PF01388">
    <property type="entry name" value="ARID"/>
    <property type="match status" value="1"/>
</dbReference>
<dbReference type="SMART" id="SM01014">
    <property type="entry name" value="ARID"/>
    <property type="match status" value="1"/>
</dbReference>
<dbReference type="SMART" id="SM00501">
    <property type="entry name" value="BRIGHT"/>
    <property type="match status" value="1"/>
</dbReference>
<dbReference type="SUPFAM" id="SSF46774">
    <property type="entry name" value="ARID-like"/>
    <property type="match status" value="1"/>
</dbReference>
<dbReference type="PROSITE" id="PS51011">
    <property type="entry name" value="ARID"/>
    <property type="match status" value="1"/>
</dbReference>
<dbReference type="PROSITE" id="PS51486">
    <property type="entry name" value="REKLES"/>
    <property type="match status" value="1"/>
</dbReference>
<organism>
    <name type="scientific">Homo sapiens</name>
    <name type="common">Human</name>
    <dbReference type="NCBI Taxonomy" id="9606"/>
    <lineage>
        <taxon>Eukaryota</taxon>
        <taxon>Metazoa</taxon>
        <taxon>Chordata</taxon>
        <taxon>Craniata</taxon>
        <taxon>Vertebrata</taxon>
        <taxon>Euteleostomi</taxon>
        <taxon>Mammalia</taxon>
        <taxon>Eutheria</taxon>
        <taxon>Euarchontoglires</taxon>
        <taxon>Primates</taxon>
        <taxon>Haplorrhini</taxon>
        <taxon>Catarrhini</taxon>
        <taxon>Hominidae</taxon>
        <taxon>Homo</taxon>
    </lineage>
</organism>
<name>ARI3C_HUMAN</name>
<protein>
    <recommendedName>
        <fullName>AT-rich interactive domain-containing protein 3C</fullName>
        <shortName>ARID domain-containing protein 3C</shortName>
    </recommendedName>
</protein>
<evidence type="ECO:0000255" key="1">
    <source>
        <dbReference type="PROSITE-ProRule" id="PRU00355"/>
    </source>
</evidence>
<evidence type="ECO:0000255" key="2">
    <source>
        <dbReference type="PROSITE-ProRule" id="PRU00819"/>
    </source>
</evidence>
<evidence type="ECO:0000256" key="3">
    <source>
        <dbReference type="SAM" id="MobiDB-lite"/>
    </source>
</evidence>
<evidence type="ECO:0000269" key="4">
    <source>
    </source>
</evidence>
<evidence type="ECO:0000312" key="5">
    <source>
        <dbReference type="HGNC" id="HGNC:21209"/>
    </source>
</evidence>
<feature type="chain" id="PRO_0000333001" description="AT-rich interactive domain-containing protein 3C">
    <location>
        <begin position="1"/>
        <end position="412"/>
    </location>
</feature>
<feature type="domain" description="ARID" evidence="1">
    <location>
        <begin position="113"/>
        <end position="205"/>
    </location>
</feature>
<feature type="domain" description="REKLES" evidence="2">
    <location>
        <begin position="304"/>
        <end position="389"/>
    </location>
</feature>
<feature type="region of interest" description="Disordered" evidence="3">
    <location>
        <begin position="1"/>
        <end position="96"/>
    </location>
</feature>
<feature type="region of interest" description="Disordered" evidence="3">
    <location>
        <begin position="232"/>
        <end position="278"/>
    </location>
</feature>
<feature type="region of interest" description="Disordered" evidence="3">
    <location>
        <begin position="388"/>
        <end position="412"/>
    </location>
</feature>
<feature type="compositionally biased region" description="Low complexity" evidence="3">
    <location>
        <begin position="1"/>
        <end position="23"/>
    </location>
</feature>
<feature type="compositionally biased region" description="Acidic residues" evidence="3">
    <location>
        <begin position="50"/>
        <end position="73"/>
    </location>
</feature>
<feature type="compositionally biased region" description="Low complexity" evidence="3">
    <location>
        <begin position="78"/>
        <end position="87"/>
    </location>
</feature>
<feature type="compositionally biased region" description="Polar residues" evidence="3">
    <location>
        <begin position="259"/>
        <end position="272"/>
    </location>
</feature>
<feature type="sequence variant" id="VAR_043033" description="In dbSNP:rs12337871.">
    <original>R</original>
    <variation>Q</variation>
    <location>
        <position position="310"/>
    </location>
</feature>
<feature type="sequence variant" id="VAR_043034" description="In dbSNP:rs3808869.">
    <original>C</original>
    <variation>G</variation>
    <location>
        <position position="335"/>
    </location>
</feature>
<feature type="mutagenesis site" description="Strongly decreases interaction with NPM1. Located in cytoplasm and nucleus. Reduced binding to target genes promoters." evidence="4">
    <original>VLFAR</original>
    <variation>DLDWG</variation>
    <location>
        <begin position="381"/>
        <end position="385"/>
    </location>
</feature>
<sequence length="412" mass="44073">MEALQKQQAARLAQGVGPLAPACPLLPPQPPLPDHRTLQAPEGALGNVGAEEEEDAEEDEEKREEAGAEEEAAEESRPGAQGPSSPSSQPPGLHPHEWTYEEQFKQLYELDADPKRKEFLDDLFSFMQKRGTPVNRVPIMAKQVLDLYALFRLVTAKGGLVEVINRKVWREVTRGLSLPTTITSAAFTLRTQYMKYLYPYECETRALSSPGELQAAIDSNRREGRRQAYTATPLFGLAGPPPRGAQDPALGPGPAPPATQSSPGPAQGSTSGLPAHACAQLSPSPIKKEESGIPNPCLALPVGLALGPTREKLAPEEPPEKRAVLMGPMDPPRPCMPPSFLPRGKVPLREERLDGPLNLAGSGISSINMALEINGVVYTGVLFARRQPVPASQGPTNPAPPPSTGPPSSILP</sequence>
<accession>A6NKF2</accession>
<proteinExistence type="evidence at protein level"/>
<gene>
    <name evidence="5" type="primary">ARID3C</name>
</gene>
<keyword id="KW-0238">DNA-binding</keyword>
<keyword id="KW-0539">Nucleus</keyword>
<keyword id="KW-1267">Proteomics identification</keyword>
<keyword id="KW-1185">Reference proteome</keyword>
<keyword id="KW-0804">Transcription</keyword>
<keyword id="KW-0805">Transcription regulation</keyword>